<organism>
    <name type="scientific">Salinibacter ruber (strain DSM 13855 / M31)</name>
    <dbReference type="NCBI Taxonomy" id="309807"/>
    <lineage>
        <taxon>Bacteria</taxon>
        <taxon>Pseudomonadati</taxon>
        <taxon>Rhodothermota</taxon>
        <taxon>Rhodothermia</taxon>
        <taxon>Rhodothermales</taxon>
        <taxon>Salinibacteraceae</taxon>
        <taxon>Salinibacter</taxon>
    </lineage>
</organism>
<evidence type="ECO:0000255" key="1">
    <source>
        <dbReference type="HAMAP-Rule" id="MF_00210"/>
    </source>
</evidence>
<feature type="chain" id="PRO_1000058615" description="3-phosphoshikimate 1-carboxyvinyltransferase">
    <location>
        <begin position="1"/>
        <end position="430"/>
    </location>
</feature>
<feature type="active site" description="Proton acceptor" evidence="1">
    <location>
        <position position="315"/>
    </location>
</feature>
<feature type="binding site" evidence="1">
    <location>
        <position position="21"/>
    </location>
    <ligand>
        <name>3-phosphoshikimate</name>
        <dbReference type="ChEBI" id="CHEBI:145989"/>
    </ligand>
</feature>
<feature type="binding site" evidence="1">
    <location>
        <position position="21"/>
    </location>
    <ligand>
        <name>phosphoenolpyruvate</name>
        <dbReference type="ChEBI" id="CHEBI:58702"/>
    </ligand>
</feature>
<feature type="binding site" evidence="1">
    <location>
        <position position="22"/>
    </location>
    <ligand>
        <name>3-phosphoshikimate</name>
        <dbReference type="ChEBI" id="CHEBI:145989"/>
    </ligand>
</feature>
<feature type="binding site" evidence="1">
    <location>
        <position position="26"/>
    </location>
    <ligand>
        <name>3-phosphoshikimate</name>
        <dbReference type="ChEBI" id="CHEBI:145989"/>
    </ligand>
</feature>
<feature type="binding site" evidence="1">
    <location>
        <position position="94"/>
    </location>
    <ligand>
        <name>phosphoenolpyruvate</name>
        <dbReference type="ChEBI" id="CHEBI:58702"/>
    </ligand>
</feature>
<feature type="binding site" evidence="1">
    <location>
        <position position="122"/>
    </location>
    <ligand>
        <name>phosphoenolpyruvate</name>
        <dbReference type="ChEBI" id="CHEBI:58702"/>
    </ligand>
</feature>
<feature type="binding site" evidence="1">
    <location>
        <position position="168"/>
    </location>
    <ligand>
        <name>3-phosphoshikimate</name>
        <dbReference type="ChEBI" id="CHEBI:145989"/>
    </ligand>
</feature>
<feature type="binding site" evidence="1">
    <location>
        <position position="170"/>
    </location>
    <ligand>
        <name>3-phosphoshikimate</name>
        <dbReference type="ChEBI" id="CHEBI:145989"/>
    </ligand>
</feature>
<feature type="binding site" evidence="1">
    <location>
        <position position="170"/>
    </location>
    <ligand>
        <name>phosphoenolpyruvate</name>
        <dbReference type="ChEBI" id="CHEBI:58702"/>
    </ligand>
</feature>
<feature type="binding site" evidence="1">
    <location>
        <position position="315"/>
    </location>
    <ligand>
        <name>3-phosphoshikimate</name>
        <dbReference type="ChEBI" id="CHEBI:145989"/>
    </ligand>
</feature>
<feature type="binding site" evidence="1">
    <location>
        <position position="342"/>
    </location>
    <ligand>
        <name>3-phosphoshikimate</name>
        <dbReference type="ChEBI" id="CHEBI:145989"/>
    </ligand>
</feature>
<feature type="binding site" evidence="1">
    <location>
        <position position="346"/>
    </location>
    <ligand>
        <name>phosphoenolpyruvate</name>
        <dbReference type="ChEBI" id="CHEBI:58702"/>
    </ligand>
</feature>
<feature type="binding site" evidence="1">
    <location>
        <position position="389"/>
    </location>
    <ligand>
        <name>phosphoenolpyruvate</name>
        <dbReference type="ChEBI" id="CHEBI:58702"/>
    </ligand>
</feature>
<comment type="function">
    <text evidence="1">Catalyzes the transfer of the enolpyruvyl moiety of phosphoenolpyruvate (PEP) to the 5-hydroxyl of shikimate-3-phosphate (S3P) to produce enolpyruvyl shikimate-3-phosphate and inorganic phosphate.</text>
</comment>
<comment type="catalytic activity">
    <reaction evidence="1">
        <text>3-phosphoshikimate + phosphoenolpyruvate = 5-O-(1-carboxyvinyl)-3-phosphoshikimate + phosphate</text>
        <dbReference type="Rhea" id="RHEA:21256"/>
        <dbReference type="ChEBI" id="CHEBI:43474"/>
        <dbReference type="ChEBI" id="CHEBI:57701"/>
        <dbReference type="ChEBI" id="CHEBI:58702"/>
        <dbReference type="ChEBI" id="CHEBI:145989"/>
        <dbReference type="EC" id="2.5.1.19"/>
    </reaction>
    <physiologicalReaction direction="left-to-right" evidence="1">
        <dbReference type="Rhea" id="RHEA:21257"/>
    </physiologicalReaction>
</comment>
<comment type="pathway">
    <text evidence="1">Metabolic intermediate biosynthesis; chorismate biosynthesis; chorismate from D-erythrose 4-phosphate and phosphoenolpyruvate: step 6/7.</text>
</comment>
<comment type="subunit">
    <text evidence="1">Monomer.</text>
</comment>
<comment type="subcellular location">
    <subcellularLocation>
        <location evidence="1">Cytoplasm</location>
    </subcellularLocation>
</comment>
<comment type="similarity">
    <text evidence="1">Belongs to the EPSP synthase family.</text>
</comment>
<protein>
    <recommendedName>
        <fullName evidence="1">3-phosphoshikimate 1-carboxyvinyltransferase</fullName>
        <ecNumber evidence="1">2.5.1.19</ecNumber>
    </recommendedName>
    <alternativeName>
        <fullName evidence="1">5-enolpyruvylshikimate-3-phosphate synthase</fullName>
        <shortName evidence="1">EPSP synthase</shortName>
        <shortName evidence="1">EPSPS</shortName>
    </alternativeName>
</protein>
<proteinExistence type="inferred from homology"/>
<reference key="1">
    <citation type="journal article" date="2005" name="Proc. Natl. Acad. Sci. U.S.A.">
        <title>The genome of Salinibacter ruber: convergence and gene exchange among hyperhalophilic bacteria and archaea.</title>
        <authorList>
            <person name="Mongodin E.F."/>
            <person name="Nelson K.E."/>
            <person name="Daugherty S."/>
            <person name="DeBoy R.T."/>
            <person name="Wister J."/>
            <person name="Khouri H."/>
            <person name="Weidman J."/>
            <person name="Walsh D.A."/>
            <person name="Papke R.T."/>
            <person name="Sanchez Perez G."/>
            <person name="Sharma A.K."/>
            <person name="Nesbo C.L."/>
            <person name="MacLeod D."/>
            <person name="Bapteste E."/>
            <person name="Doolittle W.F."/>
            <person name="Charlebois R.L."/>
            <person name="Legault B."/>
            <person name="Rodriguez-Valera F."/>
        </authorList>
    </citation>
    <scope>NUCLEOTIDE SEQUENCE [LARGE SCALE GENOMIC DNA]</scope>
    <source>
        <strain>DSM 13855 / CECT 5946 / M31</strain>
    </source>
</reference>
<keyword id="KW-0028">Amino-acid biosynthesis</keyword>
<keyword id="KW-0057">Aromatic amino acid biosynthesis</keyword>
<keyword id="KW-0963">Cytoplasm</keyword>
<keyword id="KW-1185">Reference proteome</keyword>
<keyword id="KW-0808">Transferase</keyword>
<gene>
    <name evidence="1" type="primary">aroA</name>
    <name type="ordered locus">SRU_0674</name>
</gene>
<sequence>MVQTIDQAASLRGTVSLPADKSISHRSALLSALGTGRSRVYNFPDSADPQSTLDCVRTLGIEAGRNDEGVLAIHGRGLGGLHPPSEPLDCGNSGTTMRLLSGMMAGQEFGSVLTGDESLQQRPMERIADPLQAMGARIDLRSGHAPIRIRPQRSDGLRPLEYRLPVASAQVKSCVLLAGLYASGRTVVIETTPSRDHTERMLGLEVQEVGGERHIIVEEDHTVPAVDWSVPGDFSGAAFFLVAGTLVPDSELHLDDVGLNPSRTALLDVLDGMGADITVENERVQGSEPVGDITVRSASLSGIDIGGRLIPNLIDEIPVIAVAAACAEGRTEIRDAEELRVKETDRLHAMAQNLEALGAKVQEREDGLIIDGNGPNLLGAAVTSHDDHRIAMAMGVAGLVAHGTTTISDAECARVSFPGFWDELSRVSVS</sequence>
<accession>Q2S4R9</accession>
<name>AROA_SALRD</name>
<dbReference type="EC" id="2.5.1.19" evidence="1"/>
<dbReference type="EMBL" id="CP000159">
    <property type="protein sequence ID" value="ABC44832.1"/>
    <property type="molecule type" value="Genomic_DNA"/>
</dbReference>
<dbReference type="RefSeq" id="WP_011403445.1">
    <property type="nucleotide sequence ID" value="NC_007677.1"/>
</dbReference>
<dbReference type="RefSeq" id="YP_444812.1">
    <property type="nucleotide sequence ID" value="NC_007677.1"/>
</dbReference>
<dbReference type="SMR" id="Q2S4R9"/>
<dbReference type="STRING" id="309807.SRU_0674"/>
<dbReference type="EnsemblBacteria" id="ABC44832">
    <property type="protein sequence ID" value="ABC44832"/>
    <property type="gene ID" value="SRU_0674"/>
</dbReference>
<dbReference type="GeneID" id="83727599"/>
<dbReference type="KEGG" id="sru:SRU_0674"/>
<dbReference type="PATRIC" id="fig|309807.25.peg.693"/>
<dbReference type="eggNOG" id="COG0128">
    <property type="taxonomic scope" value="Bacteria"/>
</dbReference>
<dbReference type="HOGENOM" id="CLU_024321_0_1_10"/>
<dbReference type="OrthoDB" id="9809920at2"/>
<dbReference type="UniPathway" id="UPA00053">
    <property type="reaction ID" value="UER00089"/>
</dbReference>
<dbReference type="Proteomes" id="UP000008674">
    <property type="component" value="Chromosome"/>
</dbReference>
<dbReference type="GO" id="GO:0005737">
    <property type="term" value="C:cytoplasm"/>
    <property type="evidence" value="ECO:0007669"/>
    <property type="project" value="UniProtKB-SubCell"/>
</dbReference>
<dbReference type="GO" id="GO:0003866">
    <property type="term" value="F:3-phosphoshikimate 1-carboxyvinyltransferase activity"/>
    <property type="evidence" value="ECO:0007669"/>
    <property type="project" value="UniProtKB-UniRule"/>
</dbReference>
<dbReference type="GO" id="GO:0008652">
    <property type="term" value="P:amino acid biosynthetic process"/>
    <property type="evidence" value="ECO:0007669"/>
    <property type="project" value="UniProtKB-KW"/>
</dbReference>
<dbReference type="GO" id="GO:0009073">
    <property type="term" value="P:aromatic amino acid family biosynthetic process"/>
    <property type="evidence" value="ECO:0007669"/>
    <property type="project" value="UniProtKB-KW"/>
</dbReference>
<dbReference type="GO" id="GO:0009423">
    <property type="term" value="P:chorismate biosynthetic process"/>
    <property type="evidence" value="ECO:0007669"/>
    <property type="project" value="UniProtKB-UniRule"/>
</dbReference>
<dbReference type="CDD" id="cd01556">
    <property type="entry name" value="EPSP_synthase"/>
    <property type="match status" value="1"/>
</dbReference>
<dbReference type="FunFam" id="3.65.10.10:FF:000005">
    <property type="entry name" value="3-phosphoshikimate 1-carboxyvinyltransferase"/>
    <property type="match status" value="1"/>
</dbReference>
<dbReference type="FunFam" id="3.65.10.10:FF:000006">
    <property type="entry name" value="3-phosphoshikimate 1-carboxyvinyltransferase"/>
    <property type="match status" value="1"/>
</dbReference>
<dbReference type="Gene3D" id="3.65.10.10">
    <property type="entry name" value="Enolpyruvate transferase domain"/>
    <property type="match status" value="2"/>
</dbReference>
<dbReference type="HAMAP" id="MF_00210">
    <property type="entry name" value="EPSP_synth"/>
    <property type="match status" value="1"/>
</dbReference>
<dbReference type="InterPro" id="IPR001986">
    <property type="entry name" value="Enolpyruvate_Tfrase_dom"/>
</dbReference>
<dbReference type="InterPro" id="IPR036968">
    <property type="entry name" value="Enolpyruvate_Tfrase_sf"/>
</dbReference>
<dbReference type="InterPro" id="IPR006264">
    <property type="entry name" value="EPSP_synthase"/>
</dbReference>
<dbReference type="InterPro" id="IPR023193">
    <property type="entry name" value="EPSP_synthase_CS"/>
</dbReference>
<dbReference type="InterPro" id="IPR013792">
    <property type="entry name" value="RNA3'P_cycl/enolpyr_Trfase_a/b"/>
</dbReference>
<dbReference type="NCBIfam" id="TIGR01356">
    <property type="entry name" value="aroA"/>
    <property type="match status" value="1"/>
</dbReference>
<dbReference type="PANTHER" id="PTHR21090">
    <property type="entry name" value="AROM/DEHYDROQUINATE SYNTHASE"/>
    <property type="match status" value="1"/>
</dbReference>
<dbReference type="PANTHER" id="PTHR21090:SF5">
    <property type="entry name" value="PENTAFUNCTIONAL AROM POLYPEPTIDE"/>
    <property type="match status" value="1"/>
</dbReference>
<dbReference type="Pfam" id="PF00275">
    <property type="entry name" value="EPSP_synthase"/>
    <property type="match status" value="1"/>
</dbReference>
<dbReference type="PIRSF" id="PIRSF000505">
    <property type="entry name" value="EPSPS"/>
    <property type="match status" value="1"/>
</dbReference>
<dbReference type="SUPFAM" id="SSF55205">
    <property type="entry name" value="EPT/RTPC-like"/>
    <property type="match status" value="1"/>
</dbReference>
<dbReference type="PROSITE" id="PS00104">
    <property type="entry name" value="EPSP_SYNTHASE_1"/>
    <property type="match status" value="1"/>
</dbReference>
<dbReference type="PROSITE" id="PS00885">
    <property type="entry name" value="EPSP_SYNTHASE_2"/>
    <property type="match status" value="1"/>
</dbReference>